<gene>
    <name evidence="9" type="primary">cubn-1</name>
    <name evidence="9" type="ORF">ZC116.3</name>
</gene>
<sequence>MIPNLQLFLSLILFGLLNHVSSIDYEEIHIEDSYETRSRILMVDGNVWLHAGKDKNITFKTTGNGRIYVDETDVSKLPDIASFKQLVGRIENTSQMFTTLKSRQDTQTSAMRVVLNSAKHYLVALRNMTLEVNILKKWKTDKMARDMRRRGLLVKMTRQIIGINKLIAINACDPNKCSNGGTCIPSFGAKFTCLCPPHFTGTTCEADIDECSVYNGTTAGCQNNGTCINNRGGFECQCQSGYHGSLCQYHMSACSKTFELCGPHGHCIESIVDPTGQSSSDTTTYKCICDWGFKVSSDKNNPTCVDVNECESNPCHPGVDCINLPGSFVCSGCPKGYKTDGNVCIDVNECEGEIRVCSPLSKCHNTLGSYYCDSCPTGYSGDGGNCVKDDSCVKNKCHKLATCKVTDDGYSAVGDYTCYCPDGYVGDGIGEEGCVKSASNVCQNHNCVNAGKCKPTSDTEYKCECEAGFLGKFCEKTSPCQTNPCKNGGTCIAVENSAYCDCPEHFFGRACEEEEEHCGSHFTHSSGNYTFDLQRSNKTELSICDFVFNIPAANSAVVMTFTEFDKFTQEGSGPTDCAKTDANLTLYDGPEDSSSEFATFCGDSHSVHAPLSDTPITMTSTGAMLRFRGTQGSFTIKWETVERKCGYRSSKPEGIISVPQNHQDIVCEWFISAPGGKIIEVTIPPVSMHSKDIEKCDQNSLEIYDGYATYDKHRILETCSSTLESQVVRTTGPFLTVAFISNMLQSDAGLETIRGFVLKYKFTTPDRECGAEIDNDSNDFSFSGVIESPNYGSLYPPNMDCTWKINGTLSNGSYSGDMVLKLTFDEYDVKSGFSANGPGMHYRSFRRLLPRNEVEYGIAPGFSRVFAYRNLFDMGTCTNDFLKIHDGDGTLVQETCNPRRPPNVLTVNNPAAVLTFHSDSAEQGKGFRIQYEMLCEKRVNGNGTIQTWNFPNGGAAGTCTYIIEAPKTHVISVRFLTIGLRVLPMSECFYTPNAVETYENYVEFSGGRTDNALFNRRYVCARYPFVEGAWMSVSAARRLQIKVGSDGNPMFKGLSLEYKTSDVGCGGVFSSMTGTISSPNYPEKYQPHMHCVYNLYVSWSKTVKLTFDVFDLEVTPAKSCEYDRVEIYTSYHNETVHGELLGKFCGAMIPPSIYSTTNTMAVVFVSDRSVAGPGWNAKFEAVSRKTTCDFTLTAPSNNLIFDPQQLKFDKCTYHIAVHENQRILIKMNNMSLPCDKSSLMFRNGPSETSPPFSSLPPESEICTPKVNYMPVIRSFSNRVTIVYKSINSEGSFFNLTYETITSGCGGRVDGLTGIVSAPQYPLGDKKNLKCDWTVAVALGNKVRFALTALDDLNSSDSGGFCPLFAANRIDFFDSALQGNQHLKRYCAKEMASEPITSDDNELIIKYVQSGGFQSKKIFGFSGHFTTLCNGIVHEAISGSIQSPGYPYKVYSNQFCTWTIKVPKGNRIVATVHHFSISQKSYFEGGINCITDMLKVDDTDLAEAEVTFKKTDYNITNSVNKYCDKAIPRVIRSRHNSMKLTYSSQGDPTNQFWLSWNTLGCSRDITAPQQLIITKENIDPEVDEFECQYKIQAPIGKQINLKIDKMDILPIGTNCTYTKDFSGFAIFMSDSNKSGTPFQTYCSSINQQNISSHTNELFLFLSMKKDKLKTNVFFNATVEFVDVPQSSQSDICGQVINLERGKKNYITSPGYPSAYLPGIKCNFLINAPPGYHIEYALEKYYSPYYHDDRKTDKPRFMSPYTANYTCKWYLAYNVGMLSFYEGNSSSSSPVERLCDESDTVQTFELYASQSLVIFEGASNYMSQKSGEGVRDQIGFVLSMIPKCGGVVYAESKPQTISLYHEGEGICNVTIKKKDPQDSEINIRLEEYTKLNSSSTHTIDDRIDIYVGGVLKYTEMLKATDNTMQEYASDEEMMISVQNANAPHSAIIVVSTDDKSCGGEVRHSQGTIYAPTRRLDKPFDCGWAISNSNGNTVTLSILDHNLKSTPNCTDSYIEIRANNSSGKLIKRQCDISSIDSTEYESQSLYVFLRYRPSASDGNDDDDDTPDIDQQDSNKRPLFKARYEKVSGGRPKSRYVSSPMIDNTEMMVWTLDIVDEKAGILVKFIDLYLPSPTSYLRFTESGENDDVASSDYEEVTGVMAPAEKFFETNLIRVYGKLEKSDKFSFTWDPVPLNYRNLTLAKDKPAKVYDCGGDLTPTYEWDYFTNPLPAGQSFGYEENLHCRWIIRRPMFTGIELKFDYLELEDVQNCAFDFVSFRLQFDDQPEENDDVDLSSVSKHCALVRSNNTFNFSVNRALHIHFVTDRSRHGIGFKLKYRLTCNSFEHIRPGIFFEHTLTSPNYDGNFHTPSVWKCQYSLIIESNRKVSVEIVDLDIQENSPCSYNNALILGNRFSELVETHSQYSKSSKYCGKLEQGERLNFTSARGRLFIKYNSGPNSRKGFKMIIKEQLTECPSGVLHVDDNSPSRVLNSPEFPQRIPNSVECEYVMAAPNGHRLMLTFDSENFDIDGNQKNCDLLDYIEIRDGPTVHSEVIGIYCGNQAPSTIFSTTNFLYMKLHTSEYGKSRRFVATYGIATCGGTVMVRENVTTHITSPSFPYPFATPVQCQWNVKSPNTHMIEAKVDHVWLFYNPNCTMEQLMIRDGNSTANPLIGPVCVPRHAPDVFTRSASNQITVQFTSNSTTTRGGRQYCSNKKCGFDVAVTMSGEKCGGRITNLIGTLTPPGYPGKLLSHVKCIWDFKMKPGFIYRFKITFPGANAYHKFDNQVFRIAKQHCFPDVAVVEGFPPYDGAQYSTYFCKNETQITSITDTIRIVYDDSHTREMISAIGNDQPLNSTFYAPFTIDYMAIPANSENQGCTLQINKNLTTEFHLRNKVNGKGVGLDSFCHVSIEKPANFESVHIEISDYKADSELQPAGAKCFSWGAHLKIKSDEPVPIETTVCDGKSMKNKQSEMIYVNPQIDLFISQLFRDQEGQQFNLTIEFQKCGGVISSPNTGDITSPNFGSGLKYLPGSKCRWVLEAPEGQIVKVKIVEMQIAYDHECENDHLIIGEGRQADVNTIHKYCHKMDGEQEQKLEDRFKIIKSHGRYLTLIWVTNMKYEEAGWKIQYEFLNENEECGYHTSGMSGTIYTPMFGDKDYENDLECVWDIQVPLGYHINLKFKDFDVETAENCAKDQLLISQEHSTRANSPNGDYYFLFQDEEKETPLCGIEHPKDFESESNRVRLNFTTDSQTTARGFRVNWEAECGAIYRLNHGVITSPYYPNGYPNDITCTYLIAPPDQNSVIAIKFADFDLATMRTSFGRAPCEDDYLQIIDTGTDRVLHTFCASEPMPKDALVFKGAIGLKFVSDKSYYWMEEDNKYGRKGSKGFQLAYSINKCGDNIELREGTGFITTVTSPAFPLPYTKDLDCVWNITTDPNRQLNIRFEEMKLEAFHDCSADYIEFFDSSDIMANKTLGKFCGTMDKIPQYRIVTSGPNLLIHMRTDFNVNSGGFKLAVISSLGQKEGCGGKLTATTSWQTLTSPKDEDGNYPPALLCGWTISGPVDSQLQIRIDGVDTEQLEYPPGDRPSPECIDALAIYDGQEFFSPLLAGDICTSGTPLPKILYTSHRHAFITFETDRDGTGRGFNISYSIVDSDCGGWLKATNEIKTLVYKGITSDDNKEMNKERSHQRCRFMIQGPKTEPVIVNFQQFNIPSKAGDCSDSFVEIRDVGSLQECKHPACAREPNQRKITKLCGTHVPTSHVSNTNTIQIIVSADIMPNKNQSRPSLKFEYNILDSCNRTIDTNTIKSGRLTSPNYPQVYSENSTCVTNLQSSNQKMLLVFNDFTLEEPNNVNKNCDYDYLMLKEGDSNGTYYCGSTLPKALMTSGKDLTALLKSDHSLNHAGYDASYYTVVSERDDQIQFADSYELEGVISSIGYPNGYNKSYTQIFTLRPPNSHDCSIIFTDVSISMTQLPEECFQPTEEYLEIEVKFKTQVKKARIRSCTFALKKARELILEADNNDRYIKFAFKSDAKSENDGRGFKIRWKCHSIGKTQAVLPS</sequence>
<feature type="signal peptide" evidence="2">
    <location>
        <begin position="1"/>
        <end position="22"/>
    </location>
</feature>
<feature type="chain" id="PRO_0000248516" description="Cubilin homolog">
    <location>
        <begin position="23"/>
        <end position="4047"/>
    </location>
</feature>
<feature type="domain" description="EGF-like 1" evidence="4">
    <location>
        <begin position="168"/>
        <end position="205"/>
    </location>
</feature>
<feature type="domain" description="EGF-like 2; calcium-binding" evidence="4">
    <location>
        <begin position="207"/>
        <end position="248"/>
    </location>
</feature>
<feature type="domain" description="EGF-like 3; calcium-binding" evidence="4">
    <location>
        <begin position="306"/>
        <end position="345"/>
    </location>
</feature>
<feature type="domain" description="EGF-like 4; calcium-binding" evidence="4">
    <location>
        <begin position="346"/>
        <end position="387"/>
    </location>
</feature>
<feature type="domain" description="EGF-like 5" evidence="4">
    <location>
        <begin position="388"/>
        <end position="435"/>
    </location>
</feature>
<feature type="domain" description="EGF-like 6" evidence="4">
    <location>
        <begin position="438"/>
        <end position="475"/>
    </location>
</feature>
<feature type="domain" description="EGF-like 7" evidence="4">
    <location>
        <begin position="476"/>
        <end position="512"/>
    </location>
</feature>
<feature type="domain" description="CUB 1" evidence="3">
    <location>
        <begin position="518"/>
        <end position="641"/>
    </location>
</feature>
<feature type="domain" description="CUB 2" evidence="3">
    <location>
        <begin position="645"/>
        <end position="763"/>
    </location>
</feature>
<feature type="domain" description="CUB 3" evidence="3">
    <location>
        <begin position="769"/>
        <end position="934"/>
    </location>
</feature>
<feature type="domain" description="CUB 4" evidence="3">
    <location>
        <begin position="934"/>
        <end position="1061"/>
    </location>
</feature>
<feature type="domain" description="CUB 5" evidence="3">
    <location>
        <begin position="1065"/>
        <end position="1182"/>
    </location>
</feature>
<feature type="domain" description="CUB 6" evidence="3">
    <location>
        <begin position="1188"/>
        <end position="1300"/>
    </location>
</feature>
<feature type="domain" description="CUB 7" evidence="3">
    <location>
        <begin position="1304"/>
        <end position="1427"/>
    </location>
</feature>
<feature type="domain" description="CUB 8" evidence="3">
    <location>
        <begin position="1428"/>
        <end position="1558"/>
    </location>
</feature>
<feature type="domain" description="CUB 9" evidence="3">
    <location>
        <begin position="1560"/>
        <end position="1680"/>
    </location>
</feature>
<feature type="domain" description="CUB 10" evidence="3">
    <location>
        <begin position="1691"/>
        <end position="1841"/>
    </location>
</feature>
<feature type="domain" description="CUB 11" evidence="3">
    <location>
        <begin position="1955"/>
        <end position="2083"/>
    </location>
</feature>
<feature type="domain" description="CUB 12" evidence="3">
    <location>
        <begin position="2207"/>
        <end position="2334"/>
    </location>
</feature>
<feature type="domain" description="CUB 13" evidence="3">
    <location>
        <begin position="2335"/>
        <end position="2463"/>
    </location>
</feature>
<feature type="domain" description="CUB 14" evidence="3">
    <location>
        <begin position="2467"/>
        <end position="2588"/>
    </location>
</feature>
<feature type="domain" description="CUB 15" evidence="3">
    <location>
        <begin position="2590"/>
        <end position="2717"/>
    </location>
</feature>
<feature type="domain" description="CUB 16" evidence="3">
    <location>
        <begin position="2721"/>
        <end position="2859"/>
    </location>
</feature>
<feature type="domain" description="CUB 17" evidence="3">
    <location>
        <begin position="2996"/>
        <end position="3121"/>
    </location>
</feature>
<feature type="domain" description="CUB 18" evidence="3">
    <location>
        <begin position="3127"/>
        <end position="3254"/>
    </location>
</feature>
<feature type="domain" description="CUB 19" evidence="3">
    <location>
        <begin position="3255"/>
        <end position="3385"/>
    </location>
</feature>
<feature type="domain" description="CUB 20" evidence="3">
    <location>
        <begin position="3387"/>
        <end position="3508"/>
    </location>
</feature>
<feature type="domain" description="CUB 21" evidence="3">
    <location>
        <begin position="3515"/>
        <end position="3641"/>
    </location>
</feature>
<feature type="domain" description="CUB 22" evidence="3">
    <location>
        <begin position="3645"/>
        <end position="3783"/>
    </location>
</feature>
<feature type="domain" description="CUB 23" evidence="3">
    <location>
        <begin position="3786"/>
        <end position="3900"/>
    </location>
</feature>
<feature type="region of interest" description="Disordered" evidence="5">
    <location>
        <begin position="2052"/>
        <end position="2071"/>
    </location>
</feature>
<feature type="compositionally biased region" description="Acidic residues" evidence="5">
    <location>
        <begin position="2055"/>
        <end position="2067"/>
    </location>
</feature>
<feature type="glycosylation site" description="N-linked (GlcNAc...) asparagine" evidence="2">
    <location>
        <position position="56"/>
    </location>
</feature>
<feature type="glycosylation site" description="N-linked (GlcNAc...) asparagine" evidence="2">
    <location>
        <position position="92"/>
    </location>
</feature>
<feature type="glycosylation site" description="N-linked (GlcNAc...) asparagine" evidence="2">
    <location>
        <position position="127"/>
    </location>
</feature>
<feature type="glycosylation site" description="N-linked (GlcNAc...) asparagine" evidence="2">
    <location>
        <position position="215"/>
    </location>
</feature>
<feature type="glycosylation site" description="N-linked (GlcNAc...) asparagine" evidence="2">
    <location>
        <position position="224"/>
    </location>
</feature>
<feature type="glycosylation site" description="N-linked (GlcNAc...) asparagine" evidence="2">
    <location>
        <position position="528"/>
    </location>
</feature>
<feature type="glycosylation site" description="N-linked (GlcNAc...) asparagine" evidence="2">
    <location>
        <position position="537"/>
    </location>
</feature>
<feature type="glycosylation site" description="N-linked (GlcNAc...) asparagine" evidence="2">
    <location>
        <position position="583"/>
    </location>
</feature>
<feature type="glycosylation site" description="N-linked (GlcNAc...) asparagine" evidence="2">
    <location>
        <position position="775"/>
    </location>
</feature>
<feature type="glycosylation site" description="N-linked (GlcNAc...) asparagine" evidence="7">
    <location>
        <position position="806"/>
    </location>
</feature>
<feature type="glycosylation site" description="N-linked (GlcNAc...) asparagine" evidence="7">
    <location>
        <position position="811"/>
    </location>
</feature>
<feature type="glycosylation site" description="N-linked (GlcNAc...) asparagine" evidence="2">
    <location>
        <position position="942"/>
    </location>
</feature>
<feature type="glycosylation site" description="N-linked (GlcNAc...) asparagine" evidence="2">
    <location>
        <position position="1133"/>
    </location>
</feature>
<feature type="glycosylation site" description="N-linked (GlcNAc...) asparagine" evidence="2">
    <location>
        <position position="1229"/>
    </location>
</feature>
<feature type="glycosylation site" description="N-linked (GlcNAc...) asparagine" evidence="2">
    <location>
        <position position="1294"/>
    </location>
</feature>
<feature type="glycosylation site" description="N-linked (GlcNAc...) asparagine" evidence="2">
    <location>
        <position position="1353"/>
    </location>
</feature>
<feature type="glycosylation site" description="N-linked (GlcNAc...) asparagine" evidence="2">
    <location>
        <position position="1513"/>
    </location>
</feature>
<feature type="glycosylation site" description="N-linked (GlcNAc...) asparagine" evidence="2">
    <location>
        <position position="1613"/>
    </location>
</feature>
<feature type="glycosylation site" description="N-linked (GlcNAc...) asparagine" evidence="2">
    <location>
        <position position="1631"/>
    </location>
</feature>
<feature type="glycosylation site" description="N-linked (GlcNAc...) asparagine" evidence="2">
    <location>
        <position position="1648"/>
    </location>
</feature>
<feature type="glycosylation site" description="N-linked (GlcNAc...) asparagine" evidence="2">
    <location>
        <position position="1674"/>
    </location>
</feature>
<feature type="glycosylation site" description="N-linked (GlcNAc...) asparagine" evidence="7">
    <location>
        <position position="1762"/>
    </location>
</feature>
<feature type="glycosylation site" description="N-linked (GlcNAc...) asparagine" evidence="2">
    <location>
        <position position="1782"/>
    </location>
</feature>
<feature type="glycosylation site" description="N-linked (GlcNAc...) asparagine" evidence="2">
    <location>
        <position position="1866"/>
    </location>
</feature>
<feature type="glycosylation site" description="N-linked (GlcNAc...) asparagine" evidence="2">
    <location>
        <position position="1890"/>
    </location>
</feature>
<feature type="glycosylation site" description="N-linked (GlcNAc...) asparagine" evidence="6 7">
    <location>
        <position position="2005"/>
    </location>
</feature>
<feature type="glycosylation site" description="N-linked (GlcNAc...) asparagine" evidence="2">
    <location>
        <position position="2016"/>
    </location>
</feature>
<feature type="glycosylation site" description="N-linked (GlcNAc...) asparagine" evidence="2">
    <location>
        <position position="2017"/>
    </location>
</feature>
<feature type="glycosylation site" description="N-linked (GlcNAc...) asparagine" evidence="2">
    <location>
        <position position="2193"/>
    </location>
</feature>
<feature type="glycosylation site" description="N-linked (GlcNAc...) asparagine" evidence="2">
    <location>
        <position position="2301"/>
    </location>
</feature>
<feature type="glycosylation site" description="N-linked (GlcNAc...) asparagine" evidence="2">
    <location>
        <position position="2305"/>
    </location>
</feature>
<feature type="glycosylation site" description="N-linked (GlcNAc...) asparagine" evidence="2">
    <location>
        <position position="2434"/>
    </location>
</feature>
<feature type="glycosylation site" description="N-linked (GlcNAc...) asparagine" evidence="2">
    <location>
        <position position="2599"/>
    </location>
</feature>
<feature type="glycosylation site" description="N-linked (GlcNAc...) asparagine" evidence="7">
    <location>
        <position position="2645"/>
    </location>
</feature>
<feature type="glycosylation site" description="N-linked (GlcNAc...) asparagine" evidence="2">
    <location>
        <position position="2657"/>
    </location>
</feature>
<feature type="glycosylation site" description="N-linked (GlcNAc...) asparagine" evidence="2">
    <location>
        <position position="2692"/>
    </location>
</feature>
<feature type="glycosylation site" description="N-linked (GlcNAc...) asparagine" evidence="2">
    <location>
        <position position="2811"/>
    </location>
</feature>
<feature type="glycosylation site" description="N-linked (GlcNAc...) asparagine" evidence="2">
    <location>
        <position position="2845"/>
    </location>
</feature>
<feature type="glycosylation site" description="N-linked (GlcNAc...) asparagine" evidence="2">
    <location>
        <position position="2875"/>
    </location>
</feature>
<feature type="glycosylation site" description="N-linked (GlcNAc...) asparagine" evidence="2">
    <location>
        <position position="2988"/>
    </location>
</feature>
<feature type="glycosylation site" description="N-linked (GlcNAc...) asparagine" evidence="2">
    <location>
        <position position="3235"/>
    </location>
</feature>
<feature type="glycosylation site" description="N-linked (GlcNAc...) asparagine" evidence="7">
    <location>
        <position position="3421"/>
    </location>
</feature>
<feature type="glycosylation site" description="N-linked (GlcNAc...) asparagine" evidence="2">
    <location>
        <position position="3461"/>
    </location>
</feature>
<feature type="glycosylation site" description="N-linked (GlcNAc...) asparagine" evidence="2">
    <location>
        <position position="3635"/>
    </location>
</feature>
<feature type="glycosylation site" description="N-linked (GlcNAc...) asparagine" evidence="2">
    <location>
        <position position="3770"/>
    </location>
</feature>
<feature type="glycosylation site" description="N-linked (GlcNAc...) asparagine" evidence="7">
    <location>
        <position position="3787"/>
    </location>
</feature>
<feature type="glycosylation site" description="N-linked (GlcNAc...) asparagine" evidence="2">
    <location>
        <position position="3812"/>
    </location>
</feature>
<feature type="glycosylation site" description="N-linked (GlcNAc...) asparagine" evidence="7">
    <location>
        <position position="3858"/>
    </location>
</feature>
<feature type="glycosylation site" description="N-linked (GlcNAc...) asparagine" evidence="2">
    <location>
        <position position="3930"/>
    </location>
</feature>
<feature type="disulfide bond" evidence="1">
    <location>
        <begin position="172"/>
        <end position="183"/>
    </location>
</feature>
<feature type="disulfide bond" evidence="1">
    <location>
        <begin position="177"/>
        <end position="193"/>
    </location>
</feature>
<feature type="disulfide bond" evidence="1">
    <location>
        <begin position="195"/>
        <end position="204"/>
    </location>
</feature>
<feature type="disulfide bond" evidence="1">
    <location>
        <begin position="211"/>
        <end position="227"/>
    </location>
</feature>
<feature type="disulfide bond" evidence="1">
    <location>
        <begin position="221"/>
        <end position="236"/>
    </location>
</feature>
<feature type="disulfide bond" evidence="1">
    <location>
        <begin position="238"/>
        <end position="247"/>
    </location>
</feature>
<feature type="disulfide bond" evidence="1">
    <location>
        <begin position="310"/>
        <end position="321"/>
    </location>
</feature>
<feature type="disulfide bond" evidence="1">
    <location>
        <begin position="315"/>
        <end position="330"/>
    </location>
</feature>
<feature type="disulfide bond" evidence="1">
    <location>
        <begin position="333"/>
        <end position="344"/>
    </location>
</feature>
<feature type="disulfide bond" evidence="1">
    <location>
        <begin position="350"/>
        <end position="363"/>
    </location>
</feature>
<feature type="disulfide bond" evidence="1">
    <location>
        <begin position="357"/>
        <end position="372"/>
    </location>
</feature>
<feature type="disulfide bond" evidence="1">
    <location>
        <begin position="375"/>
        <end position="386"/>
    </location>
</feature>
<feature type="disulfide bond" evidence="1">
    <location>
        <begin position="392"/>
        <end position="403"/>
    </location>
</feature>
<feature type="disulfide bond" evidence="1">
    <location>
        <begin position="397"/>
        <end position="418"/>
    </location>
</feature>
<feature type="disulfide bond" evidence="1">
    <location>
        <begin position="420"/>
        <end position="434"/>
    </location>
</feature>
<feature type="disulfide bond" evidence="1">
    <location>
        <begin position="442"/>
        <end position="453"/>
    </location>
</feature>
<feature type="disulfide bond" evidence="1">
    <location>
        <begin position="447"/>
        <end position="463"/>
    </location>
</feature>
<feature type="disulfide bond" evidence="1">
    <location>
        <begin position="465"/>
        <end position="474"/>
    </location>
</feature>
<feature type="disulfide bond" evidence="1">
    <location>
        <begin position="480"/>
        <end position="491"/>
    </location>
</feature>
<feature type="disulfide bond" evidence="1">
    <location>
        <begin position="485"/>
        <end position="500"/>
    </location>
</feature>
<feature type="disulfide bond" evidence="1">
    <location>
        <begin position="502"/>
        <end position="511"/>
    </location>
</feature>
<feature type="disulfide bond" evidence="1">
    <location>
        <begin position="518"/>
        <end position="544"/>
    </location>
</feature>
<feature type="disulfide bond" evidence="1">
    <location>
        <begin position="577"/>
        <end position="601"/>
    </location>
</feature>
<feature type="disulfide bond" evidence="1">
    <location>
        <begin position="645"/>
        <end position="667"/>
    </location>
</feature>
<feature type="disulfide bond" evidence="1">
    <location>
        <begin position="696"/>
        <end position="719"/>
    </location>
</feature>
<feature type="disulfide bond" evidence="1">
    <location>
        <begin position="769"/>
        <end position="801"/>
    </location>
</feature>
<feature type="disulfide bond" evidence="1">
    <location>
        <begin position="877"/>
        <end position="896"/>
    </location>
</feature>
<feature type="disulfide bond" evidence="1">
    <location>
        <begin position="1065"/>
        <end position="1091"/>
    </location>
</feature>
<feature type="disulfide bond" evidence="1">
    <location>
        <begin position="1120"/>
        <end position="1145"/>
    </location>
</feature>
<feature type="disulfide bond" evidence="1">
    <location>
        <begin position="1188"/>
        <end position="1211"/>
    </location>
</feature>
<feature type="disulfide bond" evidence="1">
    <location>
        <begin position="1234"/>
        <end position="1262"/>
    </location>
</feature>
<feature type="disulfide bond" evidence="1">
    <location>
        <begin position="1304"/>
        <end position="1330"/>
    </location>
</feature>
<feature type="disulfide bond" evidence="1">
    <location>
        <begin position="1428"/>
        <end position="1455"/>
    </location>
</feature>
<feature type="disulfide bond" evidence="1">
    <location>
        <begin position="1488"/>
        <end position="1522"/>
    </location>
</feature>
<feature type="disulfide bond" evidence="1">
    <location>
        <begin position="1560"/>
        <end position="1586"/>
    </location>
</feature>
<feature type="disulfide bond" evidence="1">
    <location>
        <begin position="1614"/>
        <end position="1641"/>
    </location>
</feature>
<feature type="disulfide bond" evidence="1">
    <location>
        <begin position="1691"/>
        <end position="1720"/>
    </location>
</feature>
<feature type="disulfide bond" evidence="1">
    <location>
        <begin position="1955"/>
        <end position="1979"/>
    </location>
</feature>
<feature type="disulfide bond" evidence="1">
    <location>
        <begin position="2006"/>
        <end position="2027"/>
    </location>
</feature>
<feature type="disulfide bond" evidence="1">
    <location>
        <begin position="2207"/>
        <end position="2238"/>
    </location>
</feature>
<feature type="disulfide bond" evidence="1">
    <location>
        <begin position="2265"/>
        <end position="2295"/>
    </location>
</feature>
<feature type="disulfide bond" evidence="1">
    <location>
        <begin position="2335"/>
        <end position="2368"/>
    </location>
</feature>
<feature type="disulfide bond" evidence="1">
    <location>
        <begin position="2395"/>
        <end position="2424"/>
    </location>
</feature>
<feature type="disulfide bond" evidence="1">
    <location>
        <begin position="2467"/>
        <end position="2498"/>
    </location>
</feature>
<feature type="disulfide bond" evidence="1">
    <location>
        <begin position="2590"/>
        <end position="2619"/>
    </location>
</feature>
<feature type="disulfide bond" evidence="1">
    <location>
        <begin position="2646"/>
        <end position="2668"/>
    </location>
</feature>
<feature type="disulfide bond" evidence="1">
    <location>
        <begin position="2721"/>
        <end position="2747"/>
    </location>
</feature>
<feature type="disulfide bond" evidence="1">
    <location>
        <begin position="2786"/>
        <end position="2809"/>
    </location>
</feature>
<feature type="disulfide bond" evidence="1">
    <location>
        <begin position="2996"/>
        <end position="3025"/>
    </location>
</feature>
<feature type="disulfide bond" evidence="1">
    <location>
        <begin position="3052"/>
        <end position="3074"/>
    </location>
</feature>
<feature type="disulfide bond" evidence="1">
    <location>
        <begin position="3127"/>
        <end position="3154"/>
    </location>
</feature>
<feature type="disulfide bond" evidence="1">
    <location>
        <begin position="3181"/>
        <end position="3217"/>
    </location>
</feature>
<feature type="disulfide bond" evidence="1">
    <location>
        <begin position="3255"/>
        <end position="3281"/>
    </location>
</feature>
<feature type="disulfide bond" evidence="1">
    <location>
        <begin position="3315"/>
        <end position="3335"/>
    </location>
</feature>
<feature type="disulfide bond" evidence="1">
    <location>
        <begin position="3387"/>
        <end position="3418"/>
    </location>
</feature>
<feature type="disulfide bond" evidence="1">
    <location>
        <begin position="3445"/>
        <end position="3468"/>
    </location>
</feature>
<feature type="disulfide bond" evidence="1">
    <location>
        <begin position="3515"/>
        <end position="3544"/>
    </location>
</feature>
<feature type="disulfide bond" evidence="1">
    <location>
        <begin position="3645"/>
        <end position="3680"/>
    </location>
</feature>
<feature type="disulfide bond" evidence="1">
    <location>
        <begin position="3708"/>
        <end position="3742"/>
    </location>
</feature>
<feature type="disulfide bond" evidence="1">
    <location>
        <begin position="3786"/>
        <end position="3815"/>
    </location>
</feature>
<feature type="disulfide bond" evidence="1">
    <location>
        <begin position="3845"/>
        <end position="3863"/>
    </location>
</feature>
<name>CUBN_CAEEL</name>
<protein>
    <recommendedName>
        <fullName evidence="9">Cubilin homolog</fullName>
    </recommendedName>
</protein>
<keyword id="KW-0106">Calcium</keyword>
<keyword id="KW-1015">Disulfide bond</keyword>
<keyword id="KW-0245">EGF-like domain</keyword>
<keyword id="KW-0325">Glycoprotein</keyword>
<keyword id="KW-0443">Lipid metabolism</keyword>
<keyword id="KW-0653">Protein transport</keyword>
<keyword id="KW-1185">Reference proteome</keyword>
<keyword id="KW-0677">Repeat</keyword>
<keyword id="KW-0964">Secreted</keyword>
<keyword id="KW-0732">Signal</keyword>
<keyword id="KW-0813">Transport</keyword>
<comment type="function">
    <text evidence="1">Cotransporter which plays a role in lipoprotein, vitamin and iron metabolism, by facilitating their uptake.</text>
</comment>
<comment type="subcellular location">
    <subcellularLocation>
        <location evidence="8">Secreted</location>
    </subcellularLocation>
</comment>
<proteinExistence type="evidence at protein level"/>
<evidence type="ECO:0000250" key="1"/>
<evidence type="ECO:0000255" key="2"/>
<evidence type="ECO:0000255" key="3">
    <source>
        <dbReference type="PROSITE-ProRule" id="PRU00059"/>
    </source>
</evidence>
<evidence type="ECO:0000255" key="4">
    <source>
        <dbReference type="PROSITE-ProRule" id="PRU00076"/>
    </source>
</evidence>
<evidence type="ECO:0000256" key="5">
    <source>
        <dbReference type="SAM" id="MobiDB-lite"/>
    </source>
</evidence>
<evidence type="ECO:0000269" key="6">
    <source>
    </source>
</evidence>
<evidence type="ECO:0000269" key="7">
    <source>
    </source>
</evidence>
<evidence type="ECO:0000305" key="8"/>
<evidence type="ECO:0000312" key="9">
    <source>
        <dbReference type="WormBase" id="ZC116.3"/>
    </source>
</evidence>
<dbReference type="EMBL" id="BX284605">
    <property type="protein sequence ID" value="CAA98557.3"/>
    <property type="molecule type" value="Genomic_DNA"/>
</dbReference>
<dbReference type="EMBL" id="Z74473">
    <property type="protein sequence ID" value="CAA98557.3"/>
    <property type="status" value="JOINED"/>
    <property type="molecule type" value="Genomic_DNA"/>
</dbReference>
<dbReference type="PIR" id="T22812">
    <property type="entry name" value="T22812"/>
</dbReference>
<dbReference type="RefSeq" id="NP_506157.3">
    <property type="nucleotide sequence ID" value="NM_073756.7"/>
</dbReference>
<dbReference type="SMR" id="Q20911"/>
<dbReference type="BioGRID" id="44749">
    <property type="interactions" value="1"/>
</dbReference>
<dbReference type="FunCoup" id="Q20911">
    <property type="interactions" value="9"/>
</dbReference>
<dbReference type="STRING" id="6239.ZC116.3.1"/>
<dbReference type="GlyCosmos" id="Q20911">
    <property type="glycosylation" value="49 sites, No reported glycans"/>
</dbReference>
<dbReference type="iPTMnet" id="Q20911"/>
<dbReference type="PaxDb" id="6239-ZC116.3"/>
<dbReference type="PeptideAtlas" id="Q20911"/>
<dbReference type="EnsemblMetazoa" id="ZC116.3.1">
    <property type="protein sequence ID" value="ZC116.3.1"/>
    <property type="gene ID" value="WBGene00013855"/>
</dbReference>
<dbReference type="GeneID" id="179729"/>
<dbReference type="KEGG" id="cel:CELE_ZC116.3"/>
<dbReference type="UCSC" id="ZC116.3">
    <property type="organism name" value="c. elegans"/>
</dbReference>
<dbReference type="AGR" id="WB:WBGene00013855"/>
<dbReference type="CTD" id="179729"/>
<dbReference type="WormBase" id="ZC116.3">
    <property type="protein sequence ID" value="CE42882"/>
    <property type="gene ID" value="WBGene00013855"/>
    <property type="gene designation" value="cubn-1"/>
</dbReference>
<dbReference type="eggNOG" id="KOG4292">
    <property type="taxonomic scope" value="Eukaryota"/>
</dbReference>
<dbReference type="HOGENOM" id="CLU_000172_1_0_1"/>
<dbReference type="InParanoid" id="Q20911"/>
<dbReference type="OMA" id="RGFTVRW"/>
<dbReference type="OrthoDB" id="10009301at2759"/>
<dbReference type="PhylomeDB" id="Q20911"/>
<dbReference type="Reactome" id="R-CEL-6798695">
    <property type="pathway name" value="Neutrophil degranulation"/>
</dbReference>
<dbReference type="PRO" id="PR:Q20911"/>
<dbReference type="Proteomes" id="UP000001940">
    <property type="component" value="Chromosome V"/>
</dbReference>
<dbReference type="Bgee" id="WBGene00013855">
    <property type="expression patterns" value="Expressed in embryo and 2 other cell types or tissues"/>
</dbReference>
<dbReference type="GO" id="GO:0005576">
    <property type="term" value="C:extracellular region"/>
    <property type="evidence" value="ECO:0007669"/>
    <property type="project" value="UniProtKB-SubCell"/>
</dbReference>
<dbReference type="GO" id="GO:0005509">
    <property type="term" value="F:calcium ion binding"/>
    <property type="evidence" value="ECO:0007669"/>
    <property type="project" value="InterPro"/>
</dbReference>
<dbReference type="GO" id="GO:0006629">
    <property type="term" value="P:lipid metabolic process"/>
    <property type="evidence" value="ECO:0007669"/>
    <property type="project" value="UniProtKB-KW"/>
</dbReference>
<dbReference type="GO" id="GO:0015031">
    <property type="term" value="P:protein transport"/>
    <property type="evidence" value="ECO:0007669"/>
    <property type="project" value="UniProtKB-KW"/>
</dbReference>
<dbReference type="CDD" id="cd00041">
    <property type="entry name" value="CUB"/>
    <property type="match status" value="17"/>
</dbReference>
<dbReference type="CDD" id="cd00054">
    <property type="entry name" value="EGF_CA"/>
    <property type="match status" value="5"/>
</dbReference>
<dbReference type="FunFam" id="2.60.120.290:FF:000013">
    <property type="entry name" value="Membrane frizzled-related protein"/>
    <property type="match status" value="1"/>
</dbReference>
<dbReference type="FunFam" id="2.60.120.290:FF:000005">
    <property type="entry name" value="Procollagen C-endopeptidase enhancer 1"/>
    <property type="match status" value="1"/>
</dbReference>
<dbReference type="Gene3D" id="2.10.25.10">
    <property type="entry name" value="Laminin"/>
    <property type="match status" value="6"/>
</dbReference>
<dbReference type="Gene3D" id="2.60.120.290">
    <property type="entry name" value="Spermadhesin, CUB domain"/>
    <property type="match status" value="24"/>
</dbReference>
<dbReference type="InterPro" id="IPR000859">
    <property type="entry name" value="CUB_dom"/>
</dbReference>
<dbReference type="InterPro" id="IPR001881">
    <property type="entry name" value="EGF-like_Ca-bd_dom"/>
</dbReference>
<dbReference type="InterPro" id="IPR000742">
    <property type="entry name" value="EGF-like_dom"/>
</dbReference>
<dbReference type="InterPro" id="IPR000152">
    <property type="entry name" value="EGF-type_Asp/Asn_hydroxyl_site"/>
</dbReference>
<dbReference type="InterPro" id="IPR018097">
    <property type="entry name" value="EGF_Ca-bd_CS"/>
</dbReference>
<dbReference type="InterPro" id="IPR049883">
    <property type="entry name" value="NOTCH1_EGF-like"/>
</dbReference>
<dbReference type="InterPro" id="IPR035914">
    <property type="entry name" value="Sperma_CUB_dom_sf"/>
</dbReference>
<dbReference type="PANTHER" id="PTHR24251">
    <property type="entry name" value="OVOCHYMASE-RELATED"/>
    <property type="match status" value="1"/>
</dbReference>
<dbReference type="Pfam" id="PF00431">
    <property type="entry name" value="CUB"/>
    <property type="match status" value="15"/>
</dbReference>
<dbReference type="Pfam" id="PF00008">
    <property type="entry name" value="EGF"/>
    <property type="match status" value="2"/>
</dbReference>
<dbReference type="Pfam" id="PF07645">
    <property type="entry name" value="EGF_CA"/>
    <property type="match status" value="3"/>
</dbReference>
<dbReference type="SMART" id="SM00042">
    <property type="entry name" value="CUB"/>
    <property type="match status" value="23"/>
</dbReference>
<dbReference type="SMART" id="SM00181">
    <property type="entry name" value="EGF"/>
    <property type="match status" value="8"/>
</dbReference>
<dbReference type="SMART" id="SM00179">
    <property type="entry name" value="EGF_CA"/>
    <property type="match status" value="6"/>
</dbReference>
<dbReference type="SUPFAM" id="SSF57196">
    <property type="entry name" value="EGF/Laminin"/>
    <property type="match status" value="5"/>
</dbReference>
<dbReference type="SUPFAM" id="SSF49854">
    <property type="entry name" value="Spermadhesin, CUB domain"/>
    <property type="match status" value="23"/>
</dbReference>
<dbReference type="PROSITE" id="PS00010">
    <property type="entry name" value="ASX_HYDROXYL"/>
    <property type="match status" value="1"/>
</dbReference>
<dbReference type="PROSITE" id="PS01180">
    <property type="entry name" value="CUB"/>
    <property type="match status" value="20"/>
</dbReference>
<dbReference type="PROSITE" id="PS00022">
    <property type="entry name" value="EGF_1"/>
    <property type="match status" value="4"/>
</dbReference>
<dbReference type="PROSITE" id="PS01186">
    <property type="entry name" value="EGF_2"/>
    <property type="match status" value="2"/>
</dbReference>
<dbReference type="PROSITE" id="PS50026">
    <property type="entry name" value="EGF_3"/>
    <property type="match status" value="7"/>
</dbReference>
<dbReference type="PROSITE" id="PS01187">
    <property type="entry name" value="EGF_CA"/>
    <property type="match status" value="3"/>
</dbReference>
<organism>
    <name type="scientific">Caenorhabditis elegans</name>
    <dbReference type="NCBI Taxonomy" id="6239"/>
    <lineage>
        <taxon>Eukaryota</taxon>
        <taxon>Metazoa</taxon>
        <taxon>Ecdysozoa</taxon>
        <taxon>Nematoda</taxon>
        <taxon>Chromadorea</taxon>
        <taxon>Rhabditida</taxon>
        <taxon>Rhabditina</taxon>
        <taxon>Rhabditomorpha</taxon>
        <taxon>Rhabditoidea</taxon>
        <taxon>Rhabditidae</taxon>
        <taxon>Peloderinae</taxon>
        <taxon>Caenorhabditis</taxon>
    </lineage>
</organism>
<accession>Q20911</accession>
<accession>Q23242</accession>
<reference key="1">
    <citation type="journal article" date="1998" name="Science">
        <title>Genome sequence of the nematode C. elegans: a platform for investigating biology.</title>
        <authorList>
            <consortium name="The C. elegans sequencing consortium"/>
        </authorList>
    </citation>
    <scope>NUCLEOTIDE SEQUENCE [LARGE SCALE GENOMIC DNA]</scope>
    <source>
        <strain>Bristol N2</strain>
    </source>
</reference>
<reference key="2">
    <citation type="journal article" date="2003" name="Nat. Biotechnol.">
        <title>Lectin affinity capture, isotope-coded tagging and mass spectrometry to identify N-linked glycoproteins.</title>
        <authorList>
            <person name="Kaji H."/>
            <person name="Saito H."/>
            <person name="Yamauchi Y."/>
            <person name="Shinkawa T."/>
            <person name="Taoka M."/>
            <person name="Hirabayashi J."/>
            <person name="Kasai K."/>
            <person name="Takahashi N."/>
            <person name="Isobe T."/>
        </authorList>
    </citation>
    <scope>GLYCOSYLATION [LARGE SCALE ANALYSIS] AT ASN-2005</scope>
    <scope>IDENTIFICATION BY MASS SPECTROMETRY</scope>
    <source>
        <strain>Bristol N2</strain>
    </source>
</reference>
<reference key="3">
    <citation type="journal article" date="2007" name="Mol. Cell. Proteomics">
        <title>Proteomics reveals N-linked glycoprotein diversity in Caenorhabditis elegans and suggests an atypical translocation mechanism for integral membrane proteins.</title>
        <authorList>
            <person name="Kaji H."/>
            <person name="Kamiie J."/>
            <person name="Kawakami H."/>
            <person name="Kido K."/>
            <person name="Yamauchi Y."/>
            <person name="Shinkawa T."/>
            <person name="Taoka M."/>
            <person name="Takahashi N."/>
            <person name="Isobe T."/>
        </authorList>
    </citation>
    <scope>GLYCOSYLATION [LARGE SCALE ANALYSIS] AT ASN-806; ASN-811; ASN-1762; ASN-2005; ASN-2645; ASN-3421; ASN-3787 AND ASN-3858</scope>
    <scope>IDENTIFICATION BY MASS SPECTROMETRY</scope>
    <source>
        <strain>Bristol N2</strain>
    </source>
</reference>